<gene>
    <name evidence="14 16" type="primary">Sufu</name>
</gene>
<reference key="1">
    <citation type="journal article" date="1999" name="Curr. Biol.">
        <title>Mouse suppressor of fused is a negative regulator of sonic hedgehog signaling and alters the subcellular distribution of Gli1.</title>
        <authorList>
            <person name="Ding Q."/>
            <person name="Fukami S."/>
            <person name="Meng X."/>
            <person name="Nishizaki Y."/>
            <person name="Zhang X."/>
            <person name="Sasaki H."/>
            <person name="Dlugosz A."/>
            <person name="Nakafuku M."/>
            <person name="Hui C."/>
        </authorList>
    </citation>
    <scope>NUCLEOTIDE SEQUENCE [MRNA] (ISOFORM 4)</scope>
    <scope>FUNCTION</scope>
    <scope>INTERACTION WITH GLI1; GLI2 AND GLI3</scope>
    <scope>TISSUE SPECIFICITY</scope>
</reference>
<reference key="2">
    <citation type="journal article" date="1999" name="Dev. Genes Evol.">
        <title>Suppressor of fused gene involved in hedgehog signal transduction in Drosophila melanogaster is conserved in mammals.</title>
        <authorList>
            <person name="Delattre M."/>
            <person name="Briand S."/>
            <person name="Paces-Fessy M."/>
            <person name="Blanchet-Tournier M.-F."/>
        </authorList>
    </citation>
    <scope>NUCLEOTIDE SEQUENCE [MRNA] (ISOFORM 1)</scope>
    <source>
        <tissue>Embryo</tissue>
    </source>
</reference>
<reference key="3">
    <citation type="journal article" date="2001" name="FEBS Lett.">
        <title>Genomic organization and embryonic expression of suppressor of fused, a candidate gene for the split-hand/split-foot malformation type 3.</title>
        <authorList>
            <person name="Grimm T."/>
            <person name="Teglund S."/>
            <person name="Tackels D."/>
            <person name="Sangiorgi E."/>
            <person name="Gurrieri F."/>
            <person name="Schwartz C."/>
            <person name="Toftgaard R."/>
        </authorList>
    </citation>
    <scope>NUCLEOTIDE SEQUENCE [GENOMIC DNA / MRNA] (ISOFORM 1)</scope>
    <scope>TISSUE SPECIFICITY</scope>
    <source>
        <strain>129/SvJ</strain>
        <strain>C57BL/6J</strain>
        <tissue>Mammary gland</tissue>
        <tissue>Testis</tissue>
    </source>
</reference>
<reference key="4">
    <citation type="journal article" date="2005" name="Science">
        <title>The transcriptional landscape of the mammalian genome.</title>
        <authorList>
            <person name="Carninci P."/>
            <person name="Kasukawa T."/>
            <person name="Katayama S."/>
            <person name="Gough J."/>
            <person name="Frith M.C."/>
            <person name="Maeda N."/>
            <person name="Oyama R."/>
            <person name="Ravasi T."/>
            <person name="Lenhard B."/>
            <person name="Wells C."/>
            <person name="Kodzius R."/>
            <person name="Shimokawa K."/>
            <person name="Bajic V.B."/>
            <person name="Brenner S.E."/>
            <person name="Batalov S."/>
            <person name="Forrest A.R."/>
            <person name="Zavolan M."/>
            <person name="Davis M.J."/>
            <person name="Wilming L.G."/>
            <person name="Aidinis V."/>
            <person name="Allen J.E."/>
            <person name="Ambesi-Impiombato A."/>
            <person name="Apweiler R."/>
            <person name="Aturaliya R.N."/>
            <person name="Bailey T.L."/>
            <person name="Bansal M."/>
            <person name="Baxter L."/>
            <person name="Beisel K.W."/>
            <person name="Bersano T."/>
            <person name="Bono H."/>
            <person name="Chalk A.M."/>
            <person name="Chiu K.P."/>
            <person name="Choudhary V."/>
            <person name="Christoffels A."/>
            <person name="Clutterbuck D.R."/>
            <person name="Crowe M.L."/>
            <person name="Dalla E."/>
            <person name="Dalrymple B.P."/>
            <person name="de Bono B."/>
            <person name="Della Gatta G."/>
            <person name="di Bernardo D."/>
            <person name="Down T."/>
            <person name="Engstrom P."/>
            <person name="Fagiolini M."/>
            <person name="Faulkner G."/>
            <person name="Fletcher C.F."/>
            <person name="Fukushima T."/>
            <person name="Furuno M."/>
            <person name="Futaki S."/>
            <person name="Gariboldi M."/>
            <person name="Georgii-Hemming P."/>
            <person name="Gingeras T.R."/>
            <person name="Gojobori T."/>
            <person name="Green R.E."/>
            <person name="Gustincich S."/>
            <person name="Harbers M."/>
            <person name="Hayashi Y."/>
            <person name="Hensch T.K."/>
            <person name="Hirokawa N."/>
            <person name="Hill D."/>
            <person name="Huminiecki L."/>
            <person name="Iacono M."/>
            <person name="Ikeo K."/>
            <person name="Iwama A."/>
            <person name="Ishikawa T."/>
            <person name="Jakt M."/>
            <person name="Kanapin A."/>
            <person name="Katoh M."/>
            <person name="Kawasawa Y."/>
            <person name="Kelso J."/>
            <person name="Kitamura H."/>
            <person name="Kitano H."/>
            <person name="Kollias G."/>
            <person name="Krishnan S.P."/>
            <person name="Kruger A."/>
            <person name="Kummerfeld S.K."/>
            <person name="Kurochkin I.V."/>
            <person name="Lareau L.F."/>
            <person name="Lazarevic D."/>
            <person name="Lipovich L."/>
            <person name="Liu J."/>
            <person name="Liuni S."/>
            <person name="McWilliam S."/>
            <person name="Madan Babu M."/>
            <person name="Madera M."/>
            <person name="Marchionni L."/>
            <person name="Matsuda H."/>
            <person name="Matsuzawa S."/>
            <person name="Miki H."/>
            <person name="Mignone F."/>
            <person name="Miyake S."/>
            <person name="Morris K."/>
            <person name="Mottagui-Tabar S."/>
            <person name="Mulder N."/>
            <person name="Nakano N."/>
            <person name="Nakauchi H."/>
            <person name="Ng P."/>
            <person name="Nilsson R."/>
            <person name="Nishiguchi S."/>
            <person name="Nishikawa S."/>
            <person name="Nori F."/>
            <person name="Ohara O."/>
            <person name="Okazaki Y."/>
            <person name="Orlando V."/>
            <person name="Pang K.C."/>
            <person name="Pavan W.J."/>
            <person name="Pavesi G."/>
            <person name="Pesole G."/>
            <person name="Petrovsky N."/>
            <person name="Piazza S."/>
            <person name="Reed J."/>
            <person name="Reid J.F."/>
            <person name="Ring B.Z."/>
            <person name="Ringwald M."/>
            <person name="Rost B."/>
            <person name="Ruan Y."/>
            <person name="Salzberg S.L."/>
            <person name="Sandelin A."/>
            <person name="Schneider C."/>
            <person name="Schoenbach C."/>
            <person name="Sekiguchi K."/>
            <person name="Semple C.A."/>
            <person name="Seno S."/>
            <person name="Sessa L."/>
            <person name="Sheng Y."/>
            <person name="Shibata Y."/>
            <person name="Shimada H."/>
            <person name="Shimada K."/>
            <person name="Silva D."/>
            <person name="Sinclair B."/>
            <person name="Sperling S."/>
            <person name="Stupka E."/>
            <person name="Sugiura K."/>
            <person name="Sultana R."/>
            <person name="Takenaka Y."/>
            <person name="Taki K."/>
            <person name="Tammoja K."/>
            <person name="Tan S.L."/>
            <person name="Tang S."/>
            <person name="Taylor M.S."/>
            <person name="Tegner J."/>
            <person name="Teichmann S.A."/>
            <person name="Ueda H.R."/>
            <person name="van Nimwegen E."/>
            <person name="Verardo R."/>
            <person name="Wei C.L."/>
            <person name="Yagi K."/>
            <person name="Yamanishi H."/>
            <person name="Zabarovsky E."/>
            <person name="Zhu S."/>
            <person name="Zimmer A."/>
            <person name="Hide W."/>
            <person name="Bult C."/>
            <person name="Grimmond S.M."/>
            <person name="Teasdale R.D."/>
            <person name="Liu E.T."/>
            <person name="Brusic V."/>
            <person name="Quackenbush J."/>
            <person name="Wahlestedt C."/>
            <person name="Mattick J.S."/>
            <person name="Hume D.A."/>
            <person name="Kai C."/>
            <person name="Sasaki D."/>
            <person name="Tomaru Y."/>
            <person name="Fukuda S."/>
            <person name="Kanamori-Katayama M."/>
            <person name="Suzuki M."/>
            <person name="Aoki J."/>
            <person name="Arakawa T."/>
            <person name="Iida J."/>
            <person name="Imamura K."/>
            <person name="Itoh M."/>
            <person name="Kato T."/>
            <person name="Kawaji H."/>
            <person name="Kawagashira N."/>
            <person name="Kawashima T."/>
            <person name="Kojima M."/>
            <person name="Kondo S."/>
            <person name="Konno H."/>
            <person name="Nakano K."/>
            <person name="Ninomiya N."/>
            <person name="Nishio T."/>
            <person name="Okada M."/>
            <person name="Plessy C."/>
            <person name="Shibata K."/>
            <person name="Shiraki T."/>
            <person name="Suzuki S."/>
            <person name="Tagami M."/>
            <person name="Waki K."/>
            <person name="Watahiki A."/>
            <person name="Okamura-Oho Y."/>
            <person name="Suzuki H."/>
            <person name="Kawai J."/>
            <person name="Hayashizaki Y."/>
        </authorList>
    </citation>
    <scope>NUCLEOTIDE SEQUENCE [LARGE SCALE MRNA] (ISOFORMS 2 AND 3)</scope>
    <source>
        <strain>C57BL/6J</strain>
        <tissue>Cerebellum</tissue>
        <tissue>Testis</tissue>
    </source>
</reference>
<reference key="5">
    <citation type="journal article" date="2004" name="Genome Res.">
        <title>The status, quality, and expansion of the NIH full-length cDNA project: the Mammalian Gene Collection (MGC).</title>
        <authorList>
            <consortium name="The MGC Project Team"/>
        </authorList>
    </citation>
    <scope>NUCLEOTIDE SEQUENCE [LARGE SCALE MRNA] (ISOFORM 1)</scope>
    <source>
        <strain>C57BL/6J</strain>
        <tissue>Brain</tissue>
    </source>
</reference>
<reference key="6">
    <citation type="journal article" date="2001" name="J. Biol. Chem.">
        <title>Suppressor of fused negatively regulates beta-catenin signaling.</title>
        <authorList>
            <person name="Meng X."/>
            <person name="Poon R."/>
            <person name="Zhang X."/>
            <person name="Cheah A."/>
            <person name="Ding Q."/>
            <person name="Hui C.-C."/>
            <person name="Alman B."/>
        </authorList>
    </citation>
    <scope>FUNCTION</scope>
    <scope>SUBCELLULAR LOCATION</scope>
    <scope>IDENTIFICATION IN A COMPLEX WITH CTNNB1</scope>
</reference>
<reference key="7">
    <citation type="journal article" date="2002" name="Proc. Natl. Acad. Sci. U.S.A.">
        <title>Suppressor of fused represses Gli-mediated transcription by recruiting the SAP18-mSin3 corepressor complex.</title>
        <authorList>
            <person name="Cheng S.Y."/>
            <person name="Bishop J.M."/>
        </authorList>
    </citation>
    <scope>FUNCTION</scope>
    <scope>INTERACTION WITH SAP18</scope>
    <scope>IDENTIFICATION IN A DNA-BOUND SIN3 COREPRESSOR COMPLEX</scope>
</reference>
<reference key="8">
    <citation type="journal article" date="2005" name="Development">
        <title>Cardiac and CNS defects in a mouse with targeted disruption of suppressor of fused.</title>
        <authorList>
            <person name="Cooper A.F."/>
            <person name="Yu K.P."/>
            <person name="Brueckner M."/>
            <person name="Brailey L.L."/>
            <person name="Johnson L."/>
            <person name="McGrath J.M."/>
            <person name="Bale A.E."/>
        </authorList>
    </citation>
    <scope>DISRUPTION PHENOTYPE</scope>
    <scope>FUNCTION</scope>
</reference>
<reference key="9">
    <citation type="journal article" date="2006" name="Dev. Cell">
        <title>Genetic elimination of Suppressor of fused reveals an essential repressor function in the mammalian Hedgehog signaling pathway.</title>
        <authorList>
            <person name="Svard J."/>
            <person name="Heby-Henricson K."/>
            <person name="Henricson K.H."/>
            <person name="Persson-Lek M."/>
            <person name="Rozell B."/>
            <person name="Lauth M."/>
            <person name="Bergstrom A."/>
            <person name="Ericson J."/>
            <person name="Toftgard R."/>
            <person name="Teglund S."/>
        </authorList>
    </citation>
    <scope>DISRUPTION PHENOTYPE</scope>
    <scope>FUNCTION</scope>
    <scope>SUBCELLULAR LOCATION</scope>
</reference>
<reference key="10">
    <citation type="journal article" date="2009" name="Curr. Biol.">
        <title>The mammalian Cos2 homolog Kif7 plays an essential role in modulating Hh signal transduction during development.</title>
        <authorList>
            <person name="Endoh-Yamagami S."/>
            <person name="Evangelista M."/>
            <person name="Wilson D."/>
            <person name="Wen X."/>
            <person name="Theunissen J.W."/>
            <person name="Phamluong K."/>
            <person name="Davis M."/>
            <person name="Scales S.J."/>
            <person name="Solloway M.J."/>
            <person name="de Sauvage F.J."/>
            <person name="Peterson A.S."/>
        </authorList>
    </citation>
    <scope>INTERACTION WITH KIF7</scope>
</reference>
<reference key="11">
    <citation type="journal article" date="2010" name="Cell">
        <title>A tissue-specific atlas of mouse protein phosphorylation and expression.</title>
        <authorList>
            <person name="Huttlin E.L."/>
            <person name="Jedrychowski M.P."/>
            <person name="Elias J.E."/>
            <person name="Goswami T."/>
            <person name="Rad R."/>
            <person name="Beausoleil S.A."/>
            <person name="Villen J."/>
            <person name="Haas W."/>
            <person name="Sowa M.E."/>
            <person name="Gygi S.P."/>
        </authorList>
    </citation>
    <scope>PHOSPHORYLATION [LARGE SCALE ANALYSIS] AT SER-346</scope>
    <scope>IDENTIFICATION BY MASS SPECTROMETRY [LARGE SCALE ANALYSIS]</scope>
    <source>
        <tissue>Kidney</tissue>
        <tissue>Testis</tissue>
    </source>
</reference>
<reference key="12">
    <citation type="journal article" date="2010" name="Genes Dev.">
        <title>The output of Hedgehog signaling is controlled by the dynamic association between Suppressor of Fused and the Gli proteins.</title>
        <authorList>
            <person name="Humke E.W."/>
            <person name="Dorn K.V."/>
            <person name="Milenkovic L."/>
            <person name="Scott M.P."/>
            <person name="Rohatgi R."/>
        </authorList>
    </citation>
    <scope>FUNCTION</scope>
    <scope>SUBCELLULAR LOCATION</scope>
    <scope>INTERACTION WITH GLI3</scope>
</reference>
<reference key="13">
    <citation type="journal article" date="2012" name="Development">
        <title>Kif7 regulates Gli2 through Sufu-dependent and -independent functions during skin development and tumorigenesis.</title>
        <authorList>
            <person name="Li Z.J."/>
            <person name="Nieuwenhuis E."/>
            <person name="Nien W."/>
            <person name="Zhang X."/>
            <person name="Zhang J."/>
            <person name="Puviindran V."/>
            <person name="Wainwright B.J."/>
            <person name="Kim P.C."/>
            <person name="Hui C.C."/>
        </authorList>
    </citation>
    <scope>FUNCTION IN EPIDERMAL DIFFERENTIATION</scope>
    <scope>SUBCELLULAR LOCATION</scope>
    <scope>INTERACTION WITH GLI2</scope>
</reference>
<accession>Q9Z0P7</accession>
<accession>Q8C8B4</accession>
<accession>Q99JG0</accession>
<accession>Q9D521</accession>
<accession>Q9JLU1</accession>
<dbReference type="EMBL" id="AF134893">
    <property type="protein sequence ID" value="AAF61412.1"/>
    <property type="molecule type" value="mRNA"/>
</dbReference>
<dbReference type="EMBL" id="AJ131692">
    <property type="protein sequence ID" value="CAB38081.1"/>
    <property type="molecule type" value="mRNA"/>
</dbReference>
<dbReference type="EMBL" id="AJ308625">
    <property type="protein sequence ID" value="CAC34257.1"/>
    <property type="molecule type" value="mRNA"/>
</dbReference>
<dbReference type="EMBL" id="AJ308626">
    <property type="protein sequence ID" value="CAC34258.1"/>
    <property type="molecule type" value="mRNA"/>
</dbReference>
<dbReference type="EMBL" id="AJ308627">
    <property type="protein sequence ID" value="CAC34271.1"/>
    <property type="molecule type" value="Genomic_DNA"/>
</dbReference>
<dbReference type="EMBL" id="AJ308628">
    <property type="protein sequence ID" value="CAC34271.1"/>
    <property type="status" value="JOINED"/>
    <property type="molecule type" value="Genomic_DNA"/>
</dbReference>
<dbReference type="EMBL" id="AJ308629">
    <property type="protein sequence ID" value="CAC34271.1"/>
    <property type="status" value="JOINED"/>
    <property type="molecule type" value="Genomic_DNA"/>
</dbReference>
<dbReference type="EMBL" id="AJ308630">
    <property type="protein sequence ID" value="CAC34271.1"/>
    <property type="status" value="JOINED"/>
    <property type="molecule type" value="Genomic_DNA"/>
</dbReference>
<dbReference type="EMBL" id="AJ308632">
    <property type="protein sequence ID" value="CAC34271.1"/>
    <property type="status" value="JOINED"/>
    <property type="molecule type" value="Genomic_DNA"/>
</dbReference>
<dbReference type="EMBL" id="AJ308634">
    <property type="protein sequence ID" value="CAC34271.1"/>
    <property type="status" value="JOINED"/>
    <property type="molecule type" value="Genomic_DNA"/>
</dbReference>
<dbReference type="EMBL" id="AJ308635">
    <property type="protein sequence ID" value="CAC34271.1"/>
    <property type="status" value="JOINED"/>
    <property type="molecule type" value="Genomic_DNA"/>
</dbReference>
<dbReference type="EMBL" id="AJ308633">
    <property type="protein sequence ID" value="CAC34271.1"/>
    <property type="status" value="JOINED"/>
    <property type="molecule type" value="Genomic_DNA"/>
</dbReference>
<dbReference type="EMBL" id="AJ308631">
    <property type="protein sequence ID" value="CAC34271.1"/>
    <property type="status" value="JOINED"/>
    <property type="molecule type" value="Genomic_DNA"/>
</dbReference>
<dbReference type="EMBL" id="AK015885">
    <property type="protein sequence ID" value="BAB30017.1"/>
    <property type="molecule type" value="mRNA"/>
</dbReference>
<dbReference type="EMBL" id="AK047603">
    <property type="protein sequence ID" value="BAC33095.1"/>
    <property type="molecule type" value="mRNA"/>
</dbReference>
<dbReference type="EMBL" id="BC048168">
    <property type="protein sequence ID" value="AAH48168.1"/>
    <property type="molecule type" value="mRNA"/>
</dbReference>
<dbReference type="EMBL" id="BC056997">
    <property type="protein sequence ID" value="AAH56997.1"/>
    <property type="molecule type" value="mRNA"/>
</dbReference>
<dbReference type="CCDS" id="CCDS29879.1">
    <molecule id="Q9Z0P7-1"/>
</dbReference>
<dbReference type="CCDS" id="CCDS38008.1">
    <molecule id="Q9Z0P7-4"/>
</dbReference>
<dbReference type="RefSeq" id="NP_001020562.1">
    <molecule id="Q9Z0P7-1"/>
    <property type="nucleotide sequence ID" value="NM_001025391.2"/>
</dbReference>
<dbReference type="RefSeq" id="NP_056567.2">
    <molecule id="Q9Z0P7-4"/>
    <property type="nucleotide sequence ID" value="NM_015752.3"/>
</dbReference>
<dbReference type="SMR" id="Q9Z0P7"/>
<dbReference type="BioGRID" id="204881">
    <property type="interactions" value="25"/>
</dbReference>
<dbReference type="ComplexPortal" id="CPX-147">
    <property type="entry name" value="GLI1-SUFU complex"/>
</dbReference>
<dbReference type="ComplexPortal" id="CPX-149">
    <property type="entry name" value="GLI2-SUFU complex"/>
</dbReference>
<dbReference type="ComplexPortal" id="CPX-151">
    <property type="entry name" value="GLI3-SUFU complex"/>
</dbReference>
<dbReference type="CORUM" id="Q9Z0P7"/>
<dbReference type="FunCoup" id="Q9Z0P7">
    <property type="interactions" value="3047"/>
</dbReference>
<dbReference type="IntAct" id="Q9Z0P7">
    <property type="interactions" value="21"/>
</dbReference>
<dbReference type="STRING" id="10090.ENSMUSP00000107498"/>
<dbReference type="iPTMnet" id="Q9Z0P7"/>
<dbReference type="PhosphoSitePlus" id="Q9Z0P7"/>
<dbReference type="SwissPalm" id="Q9Z0P7"/>
<dbReference type="jPOST" id="Q9Z0P7"/>
<dbReference type="PaxDb" id="10090-ENSMUSP00000107498"/>
<dbReference type="PeptideAtlas" id="Q9Z0P7"/>
<dbReference type="ProteomicsDB" id="257101">
    <molecule id="Q9Z0P7-1"/>
</dbReference>
<dbReference type="ProteomicsDB" id="257102">
    <molecule id="Q9Z0P7-2"/>
</dbReference>
<dbReference type="ProteomicsDB" id="257103">
    <molecule id="Q9Z0P7-3"/>
</dbReference>
<dbReference type="ProteomicsDB" id="257104">
    <molecule id="Q9Z0P7-4"/>
</dbReference>
<dbReference type="Pumba" id="Q9Z0P7"/>
<dbReference type="Antibodypedia" id="1768">
    <property type="antibodies" value="294 antibodies from 38 providers"/>
</dbReference>
<dbReference type="DNASU" id="24069"/>
<dbReference type="Ensembl" id="ENSMUST00000039922.13">
    <molecule id="Q9Z0P7-1"/>
    <property type="protein sequence ID" value="ENSMUSP00000049109.7"/>
    <property type="gene ID" value="ENSMUSG00000025231.18"/>
</dbReference>
<dbReference type="Ensembl" id="ENSMUST00000111867.9">
    <molecule id="Q9Z0P7-4"/>
    <property type="protein sequence ID" value="ENSMUSP00000107498.3"/>
    <property type="gene ID" value="ENSMUSG00000025231.18"/>
</dbReference>
<dbReference type="GeneID" id="24069"/>
<dbReference type="KEGG" id="mmu:24069"/>
<dbReference type="UCSC" id="uc008htn.2">
    <molecule id="Q9Z0P7-2"/>
    <property type="organism name" value="mouse"/>
</dbReference>
<dbReference type="UCSC" id="uc008hto.2">
    <molecule id="Q9Z0P7-3"/>
    <property type="organism name" value="mouse"/>
</dbReference>
<dbReference type="UCSC" id="uc008htq.2">
    <molecule id="Q9Z0P7-1"/>
    <property type="organism name" value="mouse"/>
</dbReference>
<dbReference type="AGR" id="MGI:1345643"/>
<dbReference type="CTD" id="51684"/>
<dbReference type="MGI" id="MGI:1345643">
    <property type="gene designation" value="Sufu"/>
</dbReference>
<dbReference type="VEuPathDB" id="HostDB:ENSMUSG00000025231"/>
<dbReference type="eggNOG" id="ENOG502QT57">
    <property type="taxonomic scope" value="Eukaryota"/>
</dbReference>
<dbReference type="GeneTree" id="ENSGT00390000009747"/>
<dbReference type="HOGENOM" id="CLU_033906_0_0_1"/>
<dbReference type="InParanoid" id="Q9Z0P7"/>
<dbReference type="OMA" id="CQIVGVT"/>
<dbReference type="OrthoDB" id="10038834at2759"/>
<dbReference type="PhylomeDB" id="Q9Z0P7"/>
<dbReference type="TreeFam" id="TF324548"/>
<dbReference type="Reactome" id="R-MMU-5610780">
    <property type="pathway name" value="Degradation of GLI1 by the proteasome"/>
</dbReference>
<dbReference type="Reactome" id="R-MMU-5610785">
    <property type="pathway name" value="GLI3 is processed to GLI3R by the proteasome"/>
</dbReference>
<dbReference type="Reactome" id="R-MMU-5610787">
    <property type="pathway name" value="Hedgehog 'off' state"/>
</dbReference>
<dbReference type="Reactome" id="R-MMU-5632684">
    <property type="pathway name" value="Hedgehog 'on' state"/>
</dbReference>
<dbReference type="BioGRID-ORCS" id="24069">
    <property type="hits" value="9 hits in 83 CRISPR screens"/>
</dbReference>
<dbReference type="ChiTaRS" id="Sufu">
    <property type="organism name" value="mouse"/>
</dbReference>
<dbReference type="PRO" id="PR:Q9Z0P7"/>
<dbReference type="Proteomes" id="UP000000589">
    <property type="component" value="Chromosome 19"/>
</dbReference>
<dbReference type="RNAct" id="Q9Z0P7">
    <property type="molecule type" value="protein"/>
</dbReference>
<dbReference type="Bgee" id="ENSMUSG00000025231">
    <property type="expression patterns" value="Expressed in ear vesicle and 270 other cell types or tissues"/>
</dbReference>
<dbReference type="ExpressionAtlas" id="Q9Z0P7">
    <property type="expression patterns" value="baseline and differential"/>
</dbReference>
<dbReference type="GO" id="GO:0005929">
    <property type="term" value="C:cilium"/>
    <property type="evidence" value="ECO:0000314"/>
    <property type="project" value="BHF-UCL"/>
</dbReference>
<dbReference type="GO" id="GO:0005737">
    <property type="term" value="C:cytoplasm"/>
    <property type="evidence" value="ECO:0000314"/>
    <property type="project" value="MGI"/>
</dbReference>
<dbReference type="GO" id="GO:0005829">
    <property type="term" value="C:cytosol"/>
    <property type="evidence" value="ECO:0000304"/>
    <property type="project" value="Reactome"/>
</dbReference>
<dbReference type="GO" id="GO:1990788">
    <property type="term" value="C:GLI-SUFU complex"/>
    <property type="evidence" value="ECO:0000266"/>
    <property type="project" value="ComplexPortal"/>
</dbReference>
<dbReference type="GO" id="GO:0005654">
    <property type="term" value="C:nucleoplasm"/>
    <property type="evidence" value="ECO:0007669"/>
    <property type="project" value="Ensembl"/>
</dbReference>
<dbReference type="GO" id="GO:0005634">
    <property type="term" value="C:nucleus"/>
    <property type="evidence" value="ECO:0000314"/>
    <property type="project" value="MGI"/>
</dbReference>
<dbReference type="GO" id="GO:0008013">
    <property type="term" value="F:beta-catenin binding"/>
    <property type="evidence" value="ECO:0000314"/>
    <property type="project" value="MGI"/>
</dbReference>
<dbReference type="GO" id="GO:0019901">
    <property type="term" value="F:protein kinase binding"/>
    <property type="evidence" value="ECO:0007669"/>
    <property type="project" value="Ensembl"/>
</dbReference>
<dbReference type="GO" id="GO:0035904">
    <property type="term" value="P:aorta development"/>
    <property type="evidence" value="ECO:0000315"/>
    <property type="project" value="MGI"/>
</dbReference>
<dbReference type="GO" id="GO:0060976">
    <property type="term" value="P:coronary vasculature development"/>
    <property type="evidence" value="ECO:0000315"/>
    <property type="project" value="MGI"/>
</dbReference>
<dbReference type="GO" id="GO:0007368">
    <property type="term" value="P:determination of left/right symmetry"/>
    <property type="evidence" value="ECO:0000315"/>
    <property type="project" value="MGI"/>
</dbReference>
<dbReference type="GO" id="GO:0001947">
    <property type="term" value="P:heart looping"/>
    <property type="evidence" value="ECO:0000315"/>
    <property type="project" value="MGI"/>
</dbReference>
<dbReference type="GO" id="GO:0045879">
    <property type="term" value="P:negative regulation of smoothened signaling pathway"/>
    <property type="evidence" value="ECO:0000314"/>
    <property type="project" value="MGI"/>
</dbReference>
<dbReference type="GO" id="GO:0000122">
    <property type="term" value="P:negative regulation of transcription by RNA polymerase II"/>
    <property type="evidence" value="ECO:0000314"/>
    <property type="project" value="MGI"/>
</dbReference>
<dbReference type="GO" id="GO:2000059">
    <property type="term" value="P:negative regulation of ubiquitin-dependent protein catabolic process"/>
    <property type="evidence" value="ECO:0000316"/>
    <property type="project" value="MGI"/>
</dbReference>
<dbReference type="GO" id="GO:0001843">
    <property type="term" value="P:neural tube closure"/>
    <property type="evidence" value="ECO:0000315"/>
    <property type="project" value="MGI"/>
</dbReference>
<dbReference type="GO" id="GO:2001040">
    <property type="term" value="P:positive regulation of cellular response to drug"/>
    <property type="evidence" value="ECO:0007669"/>
    <property type="project" value="Ensembl"/>
</dbReference>
<dbReference type="GO" id="GO:0006355">
    <property type="term" value="P:regulation of DNA-templated transcription"/>
    <property type="evidence" value="ECO:0000266"/>
    <property type="project" value="ComplexPortal"/>
</dbReference>
<dbReference type="GO" id="GO:0043588">
    <property type="term" value="P:skin development"/>
    <property type="evidence" value="ECO:0000315"/>
    <property type="project" value="MGI"/>
</dbReference>
<dbReference type="GO" id="GO:0007224">
    <property type="term" value="P:smoothened signaling pathway"/>
    <property type="evidence" value="ECO:0000315"/>
    <property type="project" value="MGI"/>
</dbReference>
<dbReference type="GO" id="GO:0021776">
    <property type="term" value="P:smoothened signaling pathway involved in spinal cord motor neuron cell fate specification"/>
    <property type="evidence" value="ECO:0000315"/>
    <property type="project" value="MGI"/>
</dbReference>
<dbReference type="GO" id="GO:0021775">
    <property type="term" value="P:smoothened signaling pathway involved in ventral spinal cord interneuron specification"/>
    <property type="evidence" value="ECO:0000315"/>
    <property type="project" value="MGI"/>
</dbReference>
<dbReference type="GO" id="GO:0007286">
    <property type="term" value="P:spermatid development"/>
    <property type="evidence" value="ECO:0007669"/>
    <property type="project" value="Ensembl"/>
</dbReference>
<dbReference type="GO" id="GO:0021513">
    <property type="term" value="P:spinal cord dorsal/ventral patterning"/>
    <property type="evidence" value="ECO:0000315"/>
    <property type="project" value="MGI"/>
</dbReference>
<dbReference type="GO" id="GO:0003281">
    <property type="term" value="P:ventricular septum development"/>
    <property type="evidence" value="ECO:0000315"/>
    <property type="project" value="MGI"/>
</dbReference>
<dbReference type="DisProt" id="DP01397"/>
<dbReference type="FunFam" id="3.30.1360.230:FF:000001">
    <property type="entry name" value="Suppressor of fused homolog"/>
    <property type="match status" value="1"/>
</dbReference>
<dbReference type="Gene3D" id="3.30.1360.230">
    <property type="entry name" value="Sufu, C-terminal domain"/>
    <property type="match status" value="1"/>
</dbReference>
<dbReference type="InterPro" id="IPR020941">
    <property type="entry name" value="SUFU-like_domain"/>
</dbReference>
<dbReference type="InterPro" id="IPR024314">
    <property type="entry name" value="SUFU_C"/>
</dbReference>
<dbReference type="InterPro" id="IPR038489">
    <property type="entry name" value="SUFU_C_sf"/>
</dbReference>
<dbReference type="InterPro" id="IPR037181">
    <property type="entry name" value="SUFU_N"/>
</dbReference>
<dbReference type="InterPro" id="IPR007768">
    <property type="entry name" value="Suppressor_of_fused"/>
</dbReference>
<dbReference type="InterPro" id="IPR016591">
    <property type="entry name" value="Suppressor_of_fused_euk"/>
</dbReference>
<dbReference type="PANTHER" id="PTHR10928">
    <property type="entry name" value="SUPPRESSOR OF FUSED"/>
    <property type="match status" value="1"/>
</dbReference>
<dbReference type="PANTHER" id="PTHR10928:SF2">
    <property type="entry name" value="SUPPRESSOR OF FUSED HOMOLOG"/>
    <property type="match status" value="1"/>
</dbReference>
<dbReference type="Pfam" id="PF05076">
    <property type="entry name" value="SUFU"/>
    <property type="match status" value="1"/>
</dbReference>
<dbReference type="Pfam" id="PF12470">
    <property type="entry name" value="SUFU_C"/>
    <property type="match status" value="1"/>
</dbReference>
<dbReference type="PIRSF" id="PIRSF011844">
    <property type="entry name" value="Suppressor_of_fused_protein"/>
    <property type="match status" value="1"/>
</dbReference>
<dbReference type="SUPFAM" id="SSF103359">
    <property type="entry name" value="Suppressor of Fused, N-terminal domain"/>
    <property type="match status" value="1"/>
</dbReference>
<comment type="function">
    <text evidence="1 3 4 6 7 8 10 11">Negative regulator in the hedgehog/smoothened signaling pathway (PubMed:16155214, PubMed:16459298). Down-regulates GLI1-mediated transactivation of target genes (PubMed:11960000). Part of a corepressor complex that acts on DNA-bound GLI1 (PubMed:11960000). May also act by linking GLI1 to BTRC and thereby targeting GLI1 to degradation by the proteasome (By similarity). Sequesters GLI1, GLI2 and GLI3 in the cytoplasm, this effect is overcome by binding of STK36 to both SUFU and a GLI protein (PubMed:10531011, PubMed:16459298). Negative regulator of beta-catenin signaling (PubMed:11477086). Regulates the formation of either the repressor form (GLI3R) or the activator form (GLI3A) of the full-length form of GLI3 (GLI3FL) (PubMed:10531011, PubMed:20360384). GLI3FL is complexed with SUFU in the cytoplasm and is maintained in a neutral state (PubMed:10531011, PubMed:20360384). Without the Hh signal, the SUFU-GLI3 complex is recruited to cilia, leading to the efficient processing of GLI3FL into GLI3R (PubMed:10531011, PubMed:20360384). When Hh signaling is initiated, SUFU dissociates from GLI3FL and the latter translocates to the nucleus, where it is phosphorylated, destabilized, and converted to a transcriptional activator (GLI3A) (PubMed:10531011, PubMed:20360384). Required for normal embryonic development (PubMed:16155214, PubMed:16459298). Required for the proper formation of hair follicles and the control of epidermal differentiation (PubMed:16155214, PubMed:16459298, PubMed:23034632).</text>
</comment>
<comment type="subunit">
    <text evidence="1 3 4 6 9 10 11">May form homodimers (By similarity). Interacts with ULK3; inactivating the protein kinase activity of ULK3. Interacts with RAB23 (By similarity). Part of a DNA-bound corepressor complex containing SAP18, GLI1 and SIN3 (PubMed:11960000). Part of a complex containing CTNNB1 (PubMed:11477086). Binds BTRC, GLI2, GLI3, SAP18 and STK36 (PubMed:20360384, PubMed:23034632). Binds both free and DNA-bound GLI1 (PubMed:10531011). Interacts with KIF7 (PubMed:19592253). Interacts with GLI3FL and this interaction regulates the formation of either repressor or activator forms of GLI3 (PubMed:20360384). Its association with GLI3FL is regulated by Hh signaling and dissociation of the SUFU-GLI3 interaction requires the presence of the ciliary motor KIF3A (PubMed:20360384).</text>
</comment>
<comment type="interaction">
    <interactant intactId="EBI-3508336">
        <id>Q9Z0P7</id>
    </interactant>
    <interactant intactId="EBI-3508325">
        <id>P16110</id>
        <label>Lgals3</label>
    </interactant>
    <organismsDiffer>false</organismsDiffer>
    <experiments>5</experiments>
</comment>
<comment type="interaction">
    <interactant intactId="EBI-3508336">
        <id>Q9Z0P7</id>
    </interactant>
    <interactant intactId="EBI-3508327">
        <id>O88907</id>
        <label>Pias1</label>
    </interactant>
    <organismsDiffer>false</organismsDiffer>
    <experiments>3</experiments>
</comment>
<comment type="interaction">
    <interactant intactId="EBI-3508336">
        <id>Q9Z0P7</id>
    </interactant>
    <interactant intactId="EBI-3508340">
        <id>P50636</id>
        <label>Rnf19a</label>
    </interactant>
    <organismsDiffer>false</organismsDiffer>
    <experiments>3</experiments>
</comment>
<comment type="interaction">
    <interactant intactId="EBI-3508336">
        <id>Q9Z0P7</id>
    </interactant>
    <interactant intactId="EBI-3508332">
        <id>O55128</id>
        <label>Sap18</label>
    </interactant>
    <organismsDiffer>false</organismsDiffer>
    <experiments>6</experiments>
</comment>
<comment type="subcellular location">
    <subcellularLocation>
        <location evidence="3 8">Cytoplasm</location>
    </subcellularLocation>
    <subcellularLocation>
        <location evidence="3">Nucleus</location>
    </subcellularLocation>
</comment>
<comment type="alternative products">
    <event type="alternative splicing"/>
    <isoform>
        <id>Q9Z0P7-1</id>
        <name>1</name>
        <sequence type="displayed"/>
    </isoform>
    <isoform>
        <id>Q9Z0P7-2</id>
        <name>2</name>
        <sequence type="described" ref="VSP_013281 VSP_013282"/>
    </isoform>
    <isoform>
        <id>Q9Z0P7-3</id>
        <name>3</name>
        <sequence type="described" ref="VSP_013282 VSP_013283"/>
    </isoform>
    <isoform>
        <id>Q9Z0P7-4</id>
        <name>4</name>
        <name>SU(FU)-XL</name>
        <sequence type="described" ref="VSP_013282"/>
    </isoform>
</comment>
<comment type="tissue specificity">
    <text evidence="3 5">Widely expressed in adult and fetal tissues.</text>
</comment>
<comment type="PTM">
    <text evidence="1">Polyubiquitinated at Lys-257 by the SCF(FBXL17) complex, leading to its subsequent degradation and allowing the release of GLI1 for proper hedgehog/smoothened signal transduction. Ubiquitination is impaired by phosphorylation at Ser-342, Ser-346, Ser-352 and Thr-353.</text>
</comment>
<comment type="PTM">
    <text evidence="1">Phosphorylation at Ser-342, Ser-346, Ser-352 and Thr-353 prevents ubiquitination by the SCF(FBXL17) complex.</text>
</comment>
<comment type="disruption phenotype">
    <text evidence="7 8">Complete embryonic lethality at about 10.5 dpc due to defects in neural tube closure, abnormal somites and abnormal heart looping (PubMed:16155214, PubMed:16459298). Heterozygous mice are born at the expected Mendelian rate and are fertile. After 1.5 years, they develop a skin phenotype characterized by ventral alopecia, increased pigmentation, with papules and nodules on paws and tail (PubMed:16459298).</text>
</comment>
<comment type="similarity">
    <text evidence="15">Belongs to the SUFU family.</text>
</comment>
<evidence type="ECO:0000250" key="1">
    <source>
        <dbReference type="UniProtKB" id="Q9UMX1"/>
    </source>
</evidence>
<evidence type="ECO:0000256" key="2">
    <source>
        <dbReference type="SAM" id="MobiDB-lite"/>
    </source>
</evidence>
<evidence type="ECO:0000269" key="3">
    <source>
    </source>
</evidence>
<evidence type="ECO:0000269" key="4">
    <source>
    </source>
</evidence>
<evidence type="ECO:0000269" key="5">
    <source>
    </source>
</evidence>
<evidence type="ECO:0000269" key="6">
    <source>
    </source>
</evidence>
<evidence type="ECO:0000269" key="7">
    <source>
    </source>
</evidence>
<evidence type="ECO:0000269" key="8">
    <source>
    </source>
</evidence>
<evidence type="ECO:0000269" key="9">
    <source>
    </source>
</evidence>
<evidence type="ECO:0000269" key="10">
    <source>
    </source>
</evidence>
<evidence type="ECO:0000269" key="11">
    <source>
    </source>
</evidence>
<evidence type="ECO:0000303" key="12">
    <source>
    </source>
</evidence>
<evidence type="ECO:0000303" key="13">
    <source>
    </source>
</evidence>
<evidence type="ECO:0000303" key="14">
    <source>
    </source>
</evidence>
<evidence type="ECO:0000305" key="15"/>
<evidence type="ECO:0000312" key="16">
    <source>
        <dbReference type="MGI" id="MGI:1345643"/>
    </source>
</evidence>
<evidence type="ECO:0007744" key="17">
    <source>
    </source>
</evidence>
<proteinExistence type="evidence at protein level"/>
<name>SUFU_MOUSE</name>
<keyword id="KW-0007">Acetylation</keyword>
<keyword id="KW-0025">Alternative splicing</keyword>
<keyword id="KW-0963">Cytoplasm</keyword>
<keyword id="KW-0217">Developmental protein</keyword>
<keyword id="KW-1017">Isopeptide bond</keyword>
<keyword id="KW-0539">Nucleus</keyword>
<keyword id="KW-0597">Phosphoprotein</keyword>
<keyword id="KW-1185">Reference proteome</keyword>
<keyword id="KW-0832">Ubl conjugation</keyword>
<feature type="chain" id="PRO_0000072303" description="Suppressor of fused homolog">
    <location>
        <begin position="1"/>
        <end position="484"/>
    </location>
</feature>
<feature type="region of interest" description="Disordered" evidence="2">
    <location>
        <begin position="1"/>
        <end position="21"/>
    </location>
</feature>
<feature type="region of interest" description="Disordered" evidence="1">
    <location>
        <begin position="279"/>
        <end position="360"/>
    </location>
</feature>
<feature type="compositionally biased region" description="Pro residues" evidence="2">
    <location>
        <begin position="12"/>
        <end position="21"/>
    </location>
</feature>
<feature type="compositionally biased region" description="Basic and acidic residues" evidence="2">
    <location>
        <begin position="336"/>
        <end position="347"/>
    </location>
</feature>
<feature type="modified residue" description="Phosphoserine" evidence="1">
    <location>
        <position position="301"/>
    </location>
</feature>
<feature type="modified residue" description="N6-acetyllysine" evidence="1">
    <location>
        <position position="303"/>
    </location>
</feature>
<feature type="modified residue" description="Phosphoserine" evidence="1">
    <location>
        <position position="342"/>
    </location>
</feature>
<feature type="modified residue" description="Phosphoserine" evidence="17">
    <location>
        <position position="346"/>
    </location>
</feature>
<feature type="modified residue" description="Phosphoserine" evidence="1">
    <location>
        <position position="352"/>
    </location>
</feature>
<feature type="modified residue" description="Phosphothreonine" evidence="1">
    <location>
        <position position="353"/>
    </location>
</feature>
<feature type="modified residue" description="Phosphoserine" evidence="1">
    <location>
        <position position="481"/>
    </location>
</feature>
<feature type="cross-link" description="Glycyl lysine isopeptide (Lys-Gly) (interchain with G-Cter in ubiquitin)" evidence="1">
    <location>
        <position position="257"/>
    </location>
</feature>
<feature type="cross-link" description="Glycyl lysine isopeptide (Lys-Gly) (interchain with G-Cter in SUMO2)" evidence="1">
    <location>
        <position position="321"/>
    </location>
</feature>
<feature type="splice variant" id="VSP_013281" description="In isoform 2." evidence="13">
    <location>
        <begin position="62"/>
        <end position="106"/>
    </location>
</feature>
<feature type="splice variant" id="VSP_013282" description="In isoform 2, isoform 3 and isoform 4." evidence="12 13">
    <original>Q</original>
    <variation>QQ</variation>
    <location>
        <position position="252"/>
    </location>
</feature>
<feature type="splice variant" id="VSP_013283" description="In isoform 3." evidence="13">
    <original>ILLTEEFVEKMLEDLEDLTSPEEFKLPKEYSWPEKKLKVSILPDVVFDSPLH</original>
    <variation>VRRSLSSFSSSSCSSLAACPPLPHHPKDRPLWLPC</variation>
    <location>
        <begin position="433"/>
        <end position="484"/>
    </location>
</feature>
<feature type="sequence conflict" description="In Ref. 1; AAF61412." evidence="15" ref="1">
    <original>S</original>
    <variation>C</variation>
    <location>
        <position position="79"/>
    </location>
</feature>
<feature type="sequence conflict" description="In Ref. 1; AAF61412." evidence="15" ref="1">
    <original>L</original>
    <variation>Q</variation>
    <location>
        <position position="220"/>
    </location>
</feature>
<sequence>MAELRPSVAPGPAAPPASGPSAPPAFASLFPPGLHAIYGECRRLYPDQPNPLQVTAIVKYWLGGPDPLDYVSMYRNMGSPSANIPEHWHYISFGLSDLYGDNRVHEFTGTDGPSGFGFELTFRLKRETGESAPPTWPAELMQGLARYVFQSENTFCSGDHVSWHSPLDNSESRIQHMLLTEDPQMQPVRTPFGVVTFLQIVGVCTEELHSAQQWNGQGILELLRTVPIAGGPWLITDMRRGETIFEIDPHLQERVDKGIETDGSNLSGVSAKCAWDDLSRPPEDEEDSRSICLGTQPRRLSGKDTEQIRETLRRGLEINSKPVLPPINSQRQNGLTHDRAPSRKDSLGSDSSTAIIPHELIRTRQLESVHLKFNQESGALIPLCLRGRLLHGRHFTYKSITGDMAITFVSTGVEGAFATEEHPYAAHGPWLQILLTEEFVEKMLEDLEDLTSPEEFKLPKEYSWPEKKLKVSILPDVVFDSPLH</sequence>
<organism>
    <name type="scientific">Mus musculus</name>
    <name type="common">Mouse</name>
    <dbReference type="NCBI Taxonomy" id="10090"/>
    <lineage>
        <taxon>Eukaryota</taxon>
        <taxon>Metazoa</taxon>
        <taxon>Chordata</taxon>
        <taxon>Craniata</taxon>
        <taxon>Vertebrata</taxon>
        <taxon>Euteleostomi</taxon>
        <taxon>Mammalia</taxon>
        <taxon>Eutheria</taxon>
        <taxon>Euarchontoglires</taxon>
        <taxon>Glires</taxon>
        <taxon>Rodentia</taxon>
        <taxon>Myomorpha</taxon>
        <taxon>Muroidea</taxon>
        <taxon>Muridae</taxon>
        <taxon>Murinae</taxon>
        <taxon>Mus</taxon>
        <taxon>Mus</taxon>
    </lineage>
</organism>
<protein>
    <recommendedName>
        <fullName evidence="12">Suppressor of fused homolog</fullName>
    </recommendedName>
</protein>